<dbReference type="EC" id="2.5.1.27"/>
<dbReference type="EMBL" id="X16381">
    <property type="protein sequence ID" value="CAA34418.1"/>
    <property type="molecule type" value="Genomic_DNA"/>
</dbReference>
<dbReference type="PIR" id="S06739">
    <property type="entry name" value="S06739"/>
</dbReference>
<dbReference type="SMR" id="P14333"/>
<dbReference type="GO" id="GO:0009824">
    <property type="term" value="F:AMP dimethylallyltransferase activity"/>
    <property type="evidence" value="ECO:0007669"/>
    <property type="project" value="UniProtKB-EC"/>
</dbReference>
<dbReference type="GO" id="GO:0009691">
    <property type="term" value="P:cytokinin biosynthetic process"/>
    <property type="evidence" value="ECO:0007669"/>
    <property type="project" value="UniProtKB-KW"/>
</dbReference>
<dbReference type="Gene3D" id="1.10.287.890">
    <property type="entry name" value="Crystal structure of tRNA isopentenylpyrophosphate transferase (bh2366) domain"/>
    <property type="match status" value="1"/>
</dbReference>
<dbReference type="Gene3D" id="3.40.50.300">
    <property type="entry name" value="P-loop containing nucleotide triphosphate hydrolases"/>
    <property type="match status" value="1"/>
</dbReference>
<dbReference type="InterPro" id="IPR027417">
    <property type="entry name" value="P-loop_NTPase"/>
</dbReference>
<dbReference type="InterPro" id="IPR002648">
    <property type="entry name" value="Tzs"/>
</dbReference>
<dbReference type="Pfam" id="PF01745">
    <property type="entry name" value="IPT"/>
    <property type="match status" value="1"/>
</dbReference>
<dbReference type="PIRSF" id="PIRSF000507">
    <property type="entry name" value="IPT"/>
    <property type="match status" value="1"/>
</dbReference>
<dbReference type="SUPFAM" id="SSF52540">
    <property type="entry name" value="P-loop containing nucleoside triphosphate hydrolases"/>
    <property type="match status" value="1"/>
</dbReference>
<organism>
    <name type="scientific">Ralstonia solanacearum</name>
    <name type="common">Pseudomonas solanacearum</name>
    <dbReference type="NCBI Taxonomy" id="305"/>
    <lineage>
        <taxon>Bacteria</taxon>
        <taxon>Pseudomonadati</taxon>
        <taxon>Pseudomonadota</taxon>
        <taxon>Betaproteobacteria</taxon>
        <taxon>Burkholderiales</taxon>
        <taxon>Burkholderiaceae</taxon>
        <taxon>Ralstonia</taxon>
        <taxon>Ralstonia solanacearum species complex</taxon>
    </lineage>
</organism>
<accession>P14333</accession>
<protein>
    <recommendedName>
        <fullName>Adenylate dimethylallyltransferase</fullName>
        <ecNumber>2.5.1.27</ecNumber>
    </recommendedName>
    <alternativeName>
        <fullName>Dimethylallyl transferase</fullName>
    </alternativeName>
    <alternativeName>
        <fullName>Isopentenyl transferase</fullName>
    </alternativeName>
    <alternativeName>
        <fullName>Trans-zeatin producing protein</fullName>
    </alternativeName>
</protein>
<proteinExistence type="inferred from homology"/>
<name>IPT_RALSL</name>
<comment type="function">
    <text evidence="1">Transfers dimethylallyl groups to AMP as part of the biosynthesis of cytokinin phytohormones.</text>
</comment>
<comment type="catalytic activity">
    <reaction>
        <text>dimethylallyl diphosphate + AMP = N(6)-(dimethylallyl)adenosine 5'-phosphate + diphosphate</text>
        <dbReference type="Rhea" id="RHEA:15285"/>
        <dbReference type="ChEBI" id="CHEBI:33019"/>
        <dbReference type="ChEBI" id="CHEBI:57526"/>
        <dbReference type="ChEBI" id="CHEBI:57623"/>
        <dbReference type="ChEBI" id="CHEBI:456215"/>
        <dbReference type="EC" id="2.5.1.27"/>
    </reaction>
</comment>
<comment type="similarity">
    <text evidence="2">Belongs to the isopentenyl transferase family.</text>
</comment>
<keyword id="KW-0203">Cytokinin biosynthesis</keyword>
<keyword id="KW-0808">Transferase</keyword>
<feature type="chain" id="PRO_0000216437" description="Adenylate dimethylallyltransferase">
    <location>
        <begin position="1"/>
        <end position="238"/>
    </location>
</feature>
<reference key="1">
    <citation type="journal article" date="1989" name="Nucleic Acids Res.">
        <title>Nucleotide sequence of the tzs gene from Pseudomonas solanacearum strain K60.</title>
        <authorList>
            <person name="Akiyoshi D.E."/>
            <person name="Regier D.A."/>
            <person name="Gordon M.P."/>
        </authorList>
    </citation>
    <scope>NUCLEOTIDE SEQUENCE [GENOMIC DNA]</scope>
    <source>
        <strain>K60</strain>
    </source>
</reference>
<sequence length="238" mass="26440">MPIRLYLIWGATTTGKTAQSVALARATGAPVISLDRVQCCHELAVGSGRPLPSELLGTRREYLCDRSVSSGVIPAADANQLLFDKVVRYSAHERALILEGGSVSLINAMIRDARWSALGEWALRRIVLPGRAVFIAQAIKRVRDMLEPPPGHASILDELEGLWAHPGNHAVLEDVDGYRQIIRYARASQVPIDRITSIDRSTMATLVERIAQEYWEHALWQEQEFLGIPATWRRADDA</sequence>
<gene>
    <name type="primary">tzs</name>
</gene>
<evidence type="ECO:0000250" key="1"/>
<evidence type="ECO:0000305" key="2"/>